<organism>
    <name type="scientific">Yersinia enterocolitica serotype O:8 / biotype 1B (strain NCTC 13174 / 8081)</name>
    <dbReference type="NCBI Taxonomy" id="393305"/>
    <lineage>
        <taxon>Bacteria</taxon>
        <taxon>Pseudomonadati</taxon>
        <taxon>Pseudomonadota</taxon>
        <taxon>Gammaproteobacteria</taxon>
        <taxon>Enterobacterales</taxon>
        <taxon>Yersiniaceae</taxon>
        <taxon>Yersinia</taxon>
    </lineage>
</organism>
<comment type="function">
    <text evidence="1">Catalyzes oxygen-dependent 5-hydroxyuridine (ho5U) modification at position 34 in tRNAs.</text>
</comment>
<comment type="catalytic activity">
    <reaction evidence="1">
        <text>uridine(34) in tRNA + AH2 + O2 = 5-hydroxyuridine(34) in tRNA + A + H2O</text>
        <dbReference type="Rhea" id="RHEA:64224"/>
        <dbReference type="Rhea" id="RHEA-COMP:11727"/>
        <dbReference type="Rhea" id="RHEA-COMP:13381"/>
        <dbReference type="ChEBI" id="CHEBI:13193"/>
        <dbReference type="ChEBI" id="CHEBI:15377"/>
        <dbReference type="ChEBI" id="CHEBI:15379"/>
        <dbReference type="ChEBI" id="CHEBI:17499"/>
        <dbReference type="ChEBI" id="CHEBI:65315"/>
        <dbReference type="ChEBI" id="CHEBI:136877"/>
    </reaction>
</comment>
<comment type="similarity">
    <text evidence="1">Belongs to the TrhO family.</text>
</comment>
<gene>
    <name evidence="1" type="primary">trhO</name>
    <name type="ordered locus">YE1619</name>
</gene>
<dbReference type="EC" id="1.14.-.-" evidence="1"/>
<dbReference type="EMBL" id="AM286415">
    <property type="protein sequence ID" value="CAL11693.1"/>
    <property type="molecule type" value="Genomic_DNA"/>
</dbReference>
<dbReference type="RefSeq" id="WP_011816072.1">
    <property type="nucleotide sequence ID" value="NC_008800.1"/>
</dbReference>
<dbReference type="RefSeq" id="YP_001005908.1">
    <property type="nucleotide sequence ID" value="NC_008800.1"/>
</dbReference>
<dbReference type="SMR" id="A1JN32"/>
<dbReference type="KEGG" id="yen:YE1619"/>
<dbReference type="PATRIC" id="fig|393305.7.peg.1755"/>
<dbReference type="eggNOG" id="COG1054">
    <property type="taxonomic scope" value="Bacteria"/>
</dbReference>
<dbReference type="HOGENOM" id="CLU_038878_1_1_6"/>
<dbReference type="OrthoDB" id="9778326at2"/>
<dbReference type="Proteomes" id="UP000000642">
    <property type="component" value="Chromosome"/>
</dbReference>
<dbReference type="GO" id="GO:0016705">
    <property type="term" value="F:oxidoreductase activity, acting on paired donors, with incorporation or reduction of molecular oxygen"/>
    <property type="evidence" value="ECO:0007669"/>
    <property type="project" value="UniProtKB-UniRule"/>
</dbReference>
<dbReference type="GO" id="GO:0006400">
    <property type="term" value="P:tRNA modification"/>
    <property type="evidence" value="ECO:0007669"/>
    <property type="project" value="UniProtKB-UniRule"/>
</dbReference>
<dbReference type="CDD" id="cd01518">
    <property type="entry name" value="RHOD_YceA"/>
    <property type="match status" value="1"/>
</dbReference>
<dbReference type="Gene3D" id="3.30.70.100">
    <property type="match status" value="1"/>
</dbReference>
<dbReference type="Gene3D" id="3.40.250.10">
    <property type="entry name" value="Rhodanese-like domain"/>
    <property type="match status" value="1"/>
</dbReference>
<dbReference type="HAMAP" id="MF_00469">
    <property type="entry name" value="TrhO"/>
    <property type="match status" value="1"/>
</dbReference>
<dbReference type="InterPro" id="IPR001763">
    <property type="entry name" value="Rhodanese-like_dom"/>
</dbReference>
<dbReference type="InterPro" id="IPR036873">
    <property type="entry name" value="Rhodanese-like_dom_sf"/>
</dbReference>
<dbReference type="InterPro" id="IPR022111">
    <property type="entry name" value="Rhodanese_C"/>
</dbReference>
<dbReference type="InterPro" id="IPR020936">
    <property type="entry name" value="TrhO"/>
</dbReference>
<dbReference type="InterPro" id="IPR040503">
    <property type="entry name" value="TRHO_N"/>
</dbReference>
<dbReference type="NCBIfam" id="NF001133">
    <property type="entry name" value="PRK00142.1-1"/>
    <property type="match status" value="1"/>
</dbReference>
<dbReference type="PANTHER" id="PTHR43846:SF1">
    <property type="entry name" value="TRNA URIDINE(34) HYDROXYLASE"/>
    <property type="match status" value="1"/>
</dbReference>
<dbReference type="PANTHER" id="PTHR43846">
    <property type="entry name" value="UPF0176 PROTEIN YCEA"/>
    <property type="match status" value="1"/>
</dbReference>
<dbReference type="Pfam" id="PF00581">
    <property type="entry name" value="Rhodanese"/>
    <property type="match status" value="1"/>
</dbReference>
<dbReference type="Pfam" id="PF12368">
    <property type="entry name" value="Rhodanese_C"/>
    <property type="match status" value="1"/>
</dbReference>
<dbReference type="Pfam" id="PF17773">
    <property type="entry name" value="UPF0176_N"/>
    <property type="match status" value="1"/>
</dbReference>
<dbReference type="SMART" id="SM00450">
    <property type="entry name" value="RHOD"/>
    <property type="match status" value="1"/>
</dbReference>
<dbReference type="SUPFAM" id="SSF52821">
    <property type="entry name" value="Rhodanese/Cell cycle control phosphatase"/>
    <property type="match status" value="1"/>
</dbReference>
<dbReference type="PROSITE" id="PS50206">
    <property type="entry name" value="RHODANESE_3"/>
    <property type="match status" value="1"/>
</dbReference>
<protein>
    <recommendedName>
        <fullName evidence="1">tRNA uridine(34) hydroxylase</fullName>
        <ecNumber evidence="1">1.14.-.-</ecNumber>
    </recommendedName>
    <alternativeName>
        <fullName evidence="1">tRNA hydroxylation protein O</fullName>
    </alternativeName>
</protein>
<keyword id="KW-0560">Oxidoreductase</keyword>
<keyword id="KW-0819">tRNA processing</keyword>
<proteinExistence type="inferred from homology"/>
<feature type="chain" id="PRO_1000013794" description="tRNA uridine(34) hydroxylase">
    <location>
        <begin position="1"/>
        <end position="350"/>
    </location>
</feature>
<feature type="domain" description="Rhodanese" evidence="1">
    <location>
        <begin position="146"/>
        <end position="240"/>
    </location>
</feature>
<feature type="active site" description="Cysteine persulfide intermediate" evidence="1">
    <location>
        <position position="200"/>
    </location>
</feature>
<accession>A1JN32</accession>
<name>TRHO_YERE8</name>
<sequence>MPVLHNRISNEELKARMLAETEPRTTVSFYKYFILEDAKAFRDNLYSQFVKLGVFGRVYVAKEGINAQISVPANRYDEFKVVLFAAHPALDQVRLNVAHEDDGKSFWVLRMKVRERIVADGIDDDSFDPSNVGHYLKADQVNQMIDDPDTLFVDMRNHYEYEVGHFENAIEVPSDTFREQLPMAVDMLQHDKEKNIVMYCTGGIRCEKASAYMLHNGFKNVFHVEGGIIEYARKAKEQGLPLKFIGKNFVFDERMGERISEDVIAHCHQCGTPSDTHTNCKNDGCHLLFIQCPACAAKFEGCCSPICQEELKLPQEEQRARRAGRENGIKIFNKSKGLLQTTMHIPMPDK</sequence>
<evidence type="ECO:0000255" key="1">
    <source>
        <dbReference type="HAMAP-Rule" id="MF_00469"/>
    </source>
</evidence>
<reference key="1">
    <citation type="journal article" date="2006" name="PLoS Genet.">
        <title>The complete genome sequence and comparative genome analysis of the high pathogenicity Yersinia enterocolitica strain 8081.</title>
        <authorList>
            <person name="Thomson N.R."/>
            <person name="Howard S."/>
            <person name="Wren B.W."/>
            <person name="Holden M.T.G."/>
            <person name="Crossman L."/>
            <person name="Challis G.L."/>
            <person name="Churcher C."/>
            <person name="Mungall K."/>
            <person name="Brooks K."/>
            <person name="Chillingworth T."/>
            <person name="Feltwell T."/>
            <person name="Abdellah Z."/>
            <person name="Hauser H."/>
            <person name="Jagels K."/>
            <person name="Maddison M."/>
            <person name="Moule S."/>
            <person name="Sanders M."/>
            <person name="Whitehead S."/>
            <person name="Quail M.A."/>
            <person name="Dougan G."/>
            <person name="Parkhill J."/>
            <person name="Prentice M.B."/>
        </authorList>
    </citation>
    <scope>NUCLEOTIDE SEQUENCE [LARGE SCALE GENOMIC DNA]</scope>
    <source>
        <strain>NCTC 13174 / 8081</strain>
    </source>
</reference>